<feature type="chain" id="PRO_0000255569" description="Cytochrome b6-f complex subunit 4">
    <location>
        <begin position="1"/>
        <end position="165"/>
    </location>
</feature>
<feature type="transmembrane region" description="Helical" evidence="2">
    <location>
        <begin position="36"/>
        <end position="56"/>
    </location>
</feature>
<feature type="transmembrane region" description="Helical" evidence="2">
    <location>
        <begin position="95"/>
        <end position="115"/>
    </location>
</feature>
<feature type="transmembrane region" description="Helical" evidence="2">
    <location>
        <begin position="131"/>
        <end position="151"/>
    </location>
</feature>
<protein>
    <recommendedName>
        <fullName evidence="2">Cytochrome b6-f complex subunit 4</fullName>
    </recommendedName>
    <alternativeName>
        <fullName evidence="2">17 kDa polypeptide</fullName>
    </alternativeName>
</protein>
<name>PETD_POPAL</name>
<evidence type="ECO:0000250" key="1"/>
<evidence type="ECO:0000255" key="2">
    <source>
        <dbReference type="HAMAP-Rule" id="MF_01344"/>
    </source>
</evidence>
<keyword id="KW-0150">Chloroplast</keyword>
<keyword id="KW-0249">Electron transport</keyword>
<keyword id="KW-0472">Membrane</keyword>
<keyword id="KW-0602">Photosynthesis</keyword>
<keyword id="KW-0934">Plastid</keyword>
<keyword id="KW-0793">Thylakoid</keyword>
<keyword id="KW-0812">Transmembrane</keyword>
<keyword id="KW-1133">Transmembrane helix</keyword>
<keyword id="KW-0813">Transport</keyword>
<gene>
    <name evidence="2" type="primary">petD</name>
</gene>
<accession>Q14FC6</accession>
<geneLocation type="chloroplast"/>
<reference key="1">
    <citation type="submission" date="2005-03" db="EMBL/GenBank/DDBJ databases">
        <title>Complete structure of the chloroplast genome of Populus alba.</title>
        <authorList>
            <person name="Okumura S."/>
            <person name="Yamashita A."/>
            <person name="Kanamoto H."/>
            <person name="Hattori M."/>
            <person name="Takase H."/>
            <person name="Tomizawa K."/>
        </authorList>
    </citation>
    <scope>NUCLEOTIDE SEQUENCE [LARGE SCALE GENOMIC DNA]</scope>
</reference>
<dbReference type="EMBL" id="AP008956">
    <property type="protein sequence ID" value="BAE97236.1"/>
    <property type="molecule type" value="Genomic_DNA"/>
</dbReference>
<dbReference type="RefSeq" id="YP_665589.1">
    <property type="nucleotide sequence ID" value="NC_008235.1"/>
</dbReference>
<dbReference type="SMR" id="Q14FC6"/>
<dbReference type="GeneID" id="4178240"/>
<dbReference type="KEGG" id="palz:4178240"/>
<dbReference type="OrthoDB" id="2925at3646"/>
<dbReference type="GO" id="GO:0009535">
    <property type="term" value="C:chloroplast thylakoid membrane"/>
    <property type="evidence" value="ECO:0007669"/>
    <property type="project" value="UniProtKB-SubCell"/>
</dbReference>
<dbReference type="GO" id="GO:0045158">
    <property type="term" value="F:electron transporter, transferring electrons within cytochrome b6/f complex of photosystem II activity"/>
    <property type="evidence" value="ECO:0007669"/>
    <property type="project" value="UniProtKB-UniRule"/>
</dbReference>
<dbReference type="GO" id="GO:0045156">
    <property type="term" value="F:electron transporter, transferring electrons within the cyclic electron transport pathway of photosynthesis activity"/>
    <property type="evidence" value="ECO:0007669"/>
    <property type="project" value="InterPro"/>
</dbReference>
<dbReference type="GO" id="GO:0016491">
    <property type="term" value="F:oxidoreductase activity"/>
    <property type="evidence" value="ECO:0007669"/>
    <property type="project" value="InterPro"/>
</dbReference>
<dbReference type="GO" id="GO:0009767">
    <property type="term" value="P:photosynthetic electron transport chain"/>
    <property type="evidence" value="ECO:0007669"/>
    <property type="project" value="InterPro"/>
</dbReference>
<dbReference type="CDD" id="cd00290">
    <property type="entry name" value="cytochrome_b_C"/>
    <property type="match status" value="1"/>
</dbReference>
<dbReference type="FunFam" id="1.10.287.980:FF:000001">
    <property type="entry name" value="Cytochrome b6-f complex subunit 4"/>
    <property type="match status" value="1"/>
</dbReference>
<dbReference type="FunFam" id="1.20.5.510:FF:000002">
    <property type="entry name" value="Cytochrome b6-f complex subunit 4"/>
    <property type="match status" value="1"/>
</dbReference>
<dbReference type="Gene3D" id="1.10.287.980">
    <property type="entry name" value="plastocyanin oxidoreductase"/>
    <property type="match status" value="1"/>
</dbReference>
<dbReference type="Gene3D" id="1.20.5.510">
    <property type="entry name" value="Single helix bin"/>
    <property type="match status" value="1"/>
</dbReference>
<dbReference type="HAMAP" id="MF_01344">
    <property type="entry name" value="Cytb6_f_subIV"/>
    <property type="match status" value="1"/>
</dbReference>
<dbReference type="InterPro" id="IPR005798">
    <property type="entry name" value="Cyt_b/b6_C"/>
</dbReference>
<dbReference type="InterPro" id="IPR036150">
    <property type="entry name" value="Cyt_b/b6_C_sf"/>
</dbReference>
<dbReference type="InterPro" id="IPR005870">
    <property type="entry name" value="Cyt_b6/f_cplx_suIV"/>
</dbReference>
<dbReference type="InterPro" id="IPR048260">
    <property type="entry name" value="Cytochrome_b_C_euk/bac"/>
</dbReference>
<dbReference type="NCBIfam" id="TIGR01156">
    <property type="entry name" value="cytb6_f_IV"/>
    <property type="match status" value="1"/>
</dbReference>
<dbReference type="PANTHER" id="PTHR19271">
    <property type="entry name" value="CYTOCHROME B"/>
    <property type="match status" value="1"/>
</dbReference>
<dbReference type="PANTHER" id="PTHR19271:SF40">
    <property type="entry name" value="CYTOCHROME B"/>
    <property type="match status" value="1"/>
</dbReference>
<dbReference type="Pfam" id="PF00032">
    <property type="entry name" value="Cytochrom_B_C"/>
    <property type="match status" value="1"/>
</dbReference>
<dbReference type="PIRSF" id="PIRSF000033">
    <property type="entry name" value="B6f_17K"/>
    <property type="match status" value="1"/>
</dbReference>
<dbReference type="SUPFAM" id="SSF81648">
    <property type="entry name" value="a domain/subunit of cytochrome bc1 complex (Ubiquinol-cytochrome c reductase)"/>
    <property type="match status" value="1"/>
</dbReference>
<dbReference type="PROSITE" id="PS51003">
    <property type="entry name" value="CYTB_CTER"/>
    <property type="match status" value="1"/>
</dbReference>
<comment type="function">
    <text evidence="2">Component of the cytochrome b6-f complex, which mediates electron transfer between photosystem II (PSII) and photosystem I (PSI), cyclic electron flow around PSI, and state transitions.</text>
</comment>
<comment type="subunit">
    <text evidence="1">The 4 large subunits of the cytochrome b6-f complex are cytochrome b6, subunit IV (17 kDa polypeptide, petD), cytochrome f and the Rieske protein, while the 4 small subunits are petG, petL, petM and petN. The complex functions as a dimer (By similarity).</text>
</comment>
<comment type="subcellular location">
    <subcellularLocation>
        <location evidence="2">Plastid</location>
        <location evidence="2">Chloroplast thylakoid membrane</location>
        <topology evidence="2">Multi-pass membrane protein</topology>
    </subcellularLocation>
</comment>
<comment type="similarity">
    <text evidence="2">Belongs to the cytochrome b family. PetD subfamily.</text>
</comment>
<sequence length="165" mass="18043">MGVTKKPDLNDPVLRAKLAKGMGHNYYGEPAWPNDLLYIFPVVILGTIACNVGLAVLEPSMIGEPADPFATPLEILPEWYFFPVFQILRTVPNKLLGVLLMVSVPAGLLTVPFLENVNKFQNPFRRPVATTVFLIGTVVALWLGIGATLPIDKSLTLGLFQIDSI</sequence>
<proteinExistence type="inferred from homology"/>
<organism>
    <name type="scientific">Populus alba</name>
    <name type="common">White poplar</name>
    <dbReference type="NCBI Taxonomy" id="43335"/>
    <lineage>
        <taxon>Eukaryota</taxon>
        <taxon>Viridiplantae</taxon>
        <taxon>Streptophyta</taxon>
        <taxon>Embryophyta</taxon>
        <taxon>Tracheophyta</taxon>
        <taxon>Spermatophyta</taxon>
        <taxon>Magnoliopsida</taxon>
        <taxon>eudicotyledons</taxon>
        <taxon>Gunneridae</taxon>
        <taxon>Pentapetalae</taxon>
        <taxon>rosids</taxon>
        <taxon>fabids</taxon>
        <taxon>Malpighiales</taxon>
        <taxon>Salicaceae</taxon>
        <taxon>Saliceae</taxon>
        <taxon>Populus</taxon>
    </lineage>
</organism>